<proteinExistence type="evidence at protein level"/>
<organism>
    <name type="scientific">Walterinnesia aegyptia</name>
    <name type="common">Desert black snake</name>
    <dbReference type="NCBI Taxonomy" id="64182"/>
    <lineage>
        <taxon>Eukaryota</taxon>
        <taxon>Metazoa</taxon>
        <taxon>Chordata</taxon>
        <taxon>Craniata</taxon>
        <taxon>Vertebrata</taxon>
        <taxon>Euteleostomi</taxon>
        <taxon>Lepidosauria</taxon>
        <taxon>Squamata</taxon>
        <taxon>Bifurcata</taxon>
        <taxon>Unidentata</taxon>
        <taxon>Episquamata</taxon>
        <taxon>Toxicofera</taxon>
        <taxon>Serpentes</taxon>
        <taxon>Colubroidea</taxon>
        <taxon>Elapidae</taxon>
        <taxon>Elapinae</taxon>
        <taxon>Walterinnesia</taxon>
    </lineage>
</organism>
<feature type="signal peptide" evidence="2">
    <location>
        <begin position="1"/>
        <end position="21"/>
    </location>
</feature>
<feature type="chain" id="PRO_0000419225" description="Three-finger toxin W-IV" evidence="2">
    <location>
        <begin position="22"/>
        <end position="83"/>
    </location>
</feature>
<feature type="disulfide bond" evidence="1">
    <location>
        <begin position="24"/>
        <end position="45"/>
    </location>
</feature>
<feature type="disulfide bond" evidence="1">
    <location>
        <begin position="38"/>
        <end position="62"/>
    </location>
</feature>
<feature type="disulfide bond" evidence="1">
    <location>
        <begin position="64"/>
        <end position="75"/>
    </location>
</feature>
<feature type="disulfide bond" evidence="1">
    <location>
        <begin position="76"/>
        <end position="81"/>
    </location>
</feature>
<comment type="function">
    <text evidence="3">Binds to muscle nicotinic acetylcholine receptor (nAChR) and inhibit acetylcholine from binding to the receptor, thereby impairing neuromuscular transmission.</text>
</comment>
<comment type="subcellular location">
    <subcellularLocation>
        <location evidence="3">Secreted</location>
    </subcellularLocation>
</comment>
<comment type="tissue specificity">
    <text evidence="5">Expressed by the venom gland.</text>
</comment>
<comment type="toxic dose">
    <text evidence="3">LD(50) is 0.14 mg/kg by intraperitoneal injection in mice.</text>
</comment>
<comment type="similarity">
    <text evidence="5">Belongs to the three-finger toxin family. Short-chain subfamily. Type I alpha-neurotoxin sub-subfamily.</text>
</comment>
<reference key="1">
    <citation type="journal article" date="2008" name="Toxicon">
        <title>Cloning, characterization and phylogenetic analyses of members of three major venom families from a single specimen of Walterinnesia aegyptia.</title>
        <authorList>
            <person name="Tsai H.-Y."/>
            <person name="Wang Y.M."/>
            <person name="Tsai I.-H."/>
        </authorList>
    </citation>
    <scope>NUCLEOTIDE SEQUENCE [MRNA]</scope>
    <source>
        <tissue>Venom gland</tissue>
    </source>
</reference>
<reference key="2">
    <citation type="journal article" date="1997" name="Toxicon">
        <title>Amino acid sequence of two neurotoxins from the venom of the Egyptian black snake (Walterinnesia aegyptia).</title>
        <authorList>
            <person name="Samejima Y."/>
            <person name="Aoki-Tomomatsu Y."/>
            <person name="Yanagisawa M."/>
            <person name="Mebs D."/>
        </authorList>
    </citation>
    <scope>PROTEIN SEQUENCE OF 22-83</scope>
    <source>
        <tissue>Venom</tissue>
    </source>
</reference>
<reference key="3">
    <citation type="journal article" date="1976" name="Toxicon">
        <title>Chromatographic separation of the venom of Egyptian black snake (Walterinnesia aegyptia) and pharmacological characterization of its components.</title>
        <authorList>
            <person name="Lee C.Y."/>
            <person name="Chen Y.M."/>
            <person name="Mebs D."/>
        </authorList>
    </citation>
    <scope>FUNCTION</scope>
    <scope>TOXIC DOSE</scope>
    <scope>SUBCELLULAR LOCATION</scope>
    <source>
        <tissue>Venom</tissue>
    </source>
</reference>
<keyword id="KW-0008">Acetylcholine receptor inhibiting toxin</keyword>
<keyword id="KW-0903">Direct protein sequencing</keyword>
<keyword id="KW-1015">Disulfide bond</keyword>
<keyword id="KW-0872">Ion channel impairing toxin</keyword>
<keyword id="KW-0528">Neurotoxin</keyword>
<keyword id="KW-0629">Postsynaptic neurotoxin</keyword>
<keyword id="KW-0964">Secreted</keyword>
<keyword id="KW-0732">Signal</keyword>
<keyword id="KW-0800">Toxin</keyword>
<name>3S14_WALAE</name>
<protein>
    <recommendedName>
        <fullName evidence="4">Three-finger toxin W-IV</fullName>
    </recommendedName>
</protein>
<accession>C1IC48</accession>
<evidence type="ECO:0000250" key="1">
    <source>
        <dbReference type="UniProtKB" id="P0C1Z0"/>
    </source>
</evidence>
<evidence type="ECO:0000269" key="2">
    <source>
    </source>
</evidence>
<evidence type="ECO:0000269" key="3">
    <source>
    </source>
</evidence>
<evidence type="ECO:0000303" key="4">
    <source>
    </source>
</evidence>
<evidence type="ECO:0000305" key="5"/>
<dbReference type="EMBL" id="EU196556">
    <property type="protein sequence ID" value="ABX82865.1"/>
    <property type="molecule type" value="mRNA"/>
</dbReference>
<dbReference type="SMR" id="C1IC48"/>
<dbReference type="GO" id="GO:0005576">
    <property type="term" value="C:extracellular region"/>
    <property type="evidence" value="ECO:0007669"/>
    <property type="project" value="UniProtKB-SubCell"/>
</dbReference>
<dbReference type="GO" id="GO:0030550">
    <property type="term" value="F:acetylcholine receptor inhibitor activity"/>
    <property type="evidence" value="ECO:0007669"/>
    <property type="project" value="UniProtKB-KW"/>
</dbReference>
<dbReference type="GO" id="GO:0099106">
    <property type="term" value="F:ion channel regulator activity"/>
    <property type="evidence" value="ECO:0007669"/>
    <property type="project" value="UniProtKB-KW"/>
</dbReference>
<dbReference type="GO" id="GO:0090729">
    <property type="term" value="F:toxin activity"/>
    <property type="evidence" value="ECO:0007669"/>
    <property type="project" value="UniProtKB-KW"/>
</dbReference>
<dbReference type="CDD" id="cd00206">
    <property type="entry name" value="TFP_snake_toxin"/>
    <property type="match status" value="1"/>
</dbReference>
<dbReference type="FunFam" id="2.10.60.10:FF:000024">
    <property type="entry name" value="Cytotoxin 1"/>
    <property type="match status" value="1"/>
</dbReference>
<dbReference type="Gene3D" id="2.10.60.10">
    <property type="entry name" value="CD59"/>
    <property type="match status" value="1"/>
</dbReference>
<dbReference type="InterPro" id="IPR003571">
    <property type="entry name" value="Snake_3FTx"/>
</dbReference>
<dbReference type="InterPro" id="IPR045860">
    <property type="entry name" value="Snake_toxin-like_sf"/>
</dbReference>
<dbReference type="InterPro" id="IPR018354">
    <property type="entry name" value="Snake_toxin_con_site"/>
</dbReference>
<dbReference type="InterPro" id="IPR054131">
    <property type="entry name" value="Toxin_cobra-type"/>
</dbReference>
<dbReference type="Pfam" id="PF21947">
    <property type="entry name" value="Toxin_cobra-type"/>
    <property type="match status" value="1"/>
</dbReference>
<dbReference type="SUPFAM" id="SSF57302">
    <property type="entry name" value="Snake toxin-like"/>
    <property type="match status" value="1"/>
</dbReference>
<dbReference type="PROSITE" id="PS00272">
    <property type="entry name" value="SNAKE_TOXIN"/>
    <property type="match status" value="1"/>
</dbReference>
<sequence length="83" mass="9055">MKTLLLTLVVVTIVCLDLGHTLLCHNQQSSTSPTTTCCSGGESKCYKKRWPTHRGTITERGCGCPTVKKGIELHCCTTDQCNL</sequence>